<protein>
    <recommendedName>
        <fullName>Carbonic anhydrase 6</fullName>
        <ecNumber>4.2.1.1</ecNumber>
    </recommendedName>
    <alternativeName>
        <fullName>Carbonate dehydratase VI</fullName>
    </alternativeName>
    <alternativeName>
        <fullName>Carbonic anhydrase VI</fullName>
        <shortName>CA-VI</shortName>
    </alternativeName>
    <alternativeName>
        <fullName>Salivary carbonic anhydrase</fullName>
    </alternativeName>
    <alternativeName>
        <fullName>Secreted carbonic anhydrase</fullName>
    </alternativeName>
</protein>
<organism>
    <name type="scientific">Homo sapiens</name>
    <name type="common">Human</name>
    <dbReference type="NCBI Taxonomy" id="9606"/>
    <lineage>
        <taxon>Eukaryota</taxon>
        <taxon>Metazoa</taxon>
        <taxon>Chordata</taxon>
        <taxon>Craniata</taxon>
        <taxon>Vertebrata</taxon>
        <taxon>Euteleostomi</taxon>
        <taxon>Mammalia</taxon>
        <taxon>Eutheria</taxon>
        <taxon>Euarchontoglires</taxon>
        <taxon>Primates</taxon>
        <taxon>Haplorrhini</taxon>
        <taxon>Catarrhini</taxon>
        <taxon>Hominidae</taxon>
        <taxon>Homo</taxon>
    </lineage>
</organism>
<name>CAH6_HUMAN</name>
<proteinExistence type="evidence at protein level"/>
<reference key="1">
    <citation type="journal article" date="1991" name="Biochemistry">
        <title>Human secreted carbonic anhydrase: cDNA cloning, nucleotide sequence, and hybridization histochemistry.</title>
        <authorList>
            <person name="Aldred P."/>
            <person name="Fu P."/>
            <person name="Barrett G."/>
            <person name="Penschow J.D."/>
            <person name="Wright R."/>
            <person name="Coghlan J.P."/>
            <person name="Fernley R.T."/>
        </authorList>
    </citation>
    <scope>NUCLEOTIDE SEQUENCE [MRNA] (ISOFORM 1)</scope>
    <scope>VARIANT GLY-90</scope>
</reference>
<reference key="2">
    <citation type="submission" date="1999-02" db="EMBL/GenBank/DDBJ databases">
        <authorList>
            <person name="Grubb D.J."/>
        </authorList>
    </citation>
    <scope>NUCLEOTIDE SEQUENCE [GENOMIC DNA]</scope>
    <scope>VARIANT GLY-90</scope>
</reference>
<reference key="3">
    <citation type="submission" date="2003-02" db="EMBL/GenBank/DDBJ databases">
        <title>CA6 mRNA, nirs splice variant 1.</title>
        <authorList>
            <person name="Tabata Y."/>
            <person name="Hayashi A."/>
            <person name="Sameshima E."/>
            <person name="Iida K."/>
            <person name="Mitsuyama M."/>
            <person name="Kanai S."/>
            <person name="Furuya T."/>
            <person name="Saito T."/>
        </authorList>
    </citation>
    <scope>NUCLEOTIDE SEQUENCE [MRNA] (ISOFORMS 2 AND 3)</scope>
    <scope>VARIANT GLY-90</scope>
</reference>
<reference key="4">
    <citation type="journal article" date="2006" name="Nature">
        <title>The DNA sequence and biological annotation of human chromosome 1.</title>
        <authorList>
            <person name="Gregory S.G."/>
            <person name="Barlow K.F."/>
            <person name="McLay K.E."/>
            <person name="Kaul R."/>
            <person name="Swarbreck D."/>
            <person name="Dunham A."/>
            <person name="Scott C.E."/>
            <person name="Howe K.L."/>
            <person name="Woodfine K."/>
            <person name="Spencer C.C.A."/>
            <person name="Jones M.C."/>
            <person name="Gillson C."/>
            <person name="Searle S."/>
            <person name="Zhou Y."/>
            <person name="Kokocinski F."/>
            <person name="McDonald L."/>
            <person name="Evans R."/>
            <person name="Phillips K."/>
            <person name="Atkinson A."/>
            <person name="Cooper R."/>
            <person name="Jones C."/>
            <person name="Hall R.E."/>
            <person name="Andrews T.D."/>
            <person name="Lloyd C."/>
            <person name="Ainscough R."/>
            <person name="Almeida J.P."/>
            <person name="Ambrose K.D."/>
            <person name="Anderson F."/>
            <person name="Andrew R.W."/>
            <person name="Ashwell R.I.S."/>
            <person name="Aubin K."/>
            <person name="Babbage A.K."/>
            <person name="Bagguley C.L."/>
            <person name="Bailey J."/>
            <person name="Beasley H."/>
            <person name="Bethel G."/>
            <person name="Bird C.P."/>
            <person name="Bray-Allen S."/>
            <person name="Brown J.Y."/>
            <person name="Brown A.J."/>
            <person name="Buckley D."/>
            <person name="Burton J."/>
            <person name="Bye J."/>
            <person name="Carder C."/>
            <person name="Chapman J.C."/>
            <person name="Clark S.Y."/>
            <person name="Clarke G."/>
            <person name="Clee C."/>
            <person name="Cobley V."/>
            <person name="Collier R.E."/>
            <person name="Corby N."/>
            <person name="Coville G.J."/>
            <person name="Davies J."/>
            <person name="Deadman R."/>
            <person name="Dunn M."/>
            <person name="Earthrowl M."/>
            <person name="Ellington A.G."/>
            <person name="Errington H."/>
            <person name="Frankish A."/>
            <person name="Frankland J."/>
            <person name="French L."/>
            <person name="Garner P."/>
            <person name="Garnett J."/>
            <person name="Gay L."/>
            <person name="Ghori M.R.J."/>
            <person name="Gibson R."/>
            <person name="Gilby L.M."/>
            <person name="Gillett W."/>
            <person name="Glithero R.J."/>
            <person name="Grafham D.V."/>
            <person name="Griffiths C."/>
            <person name="Griffiths-Jones S."/>
            <person name="Grocock R."/>
            <person name="Hammond S."/>
            <person name="Harrison E.S.I."/>
            <person name="Hart E."/>
            <person name="Haugen E."/>
            <person name="Heath P.D."/>
            <person name="Holmes S."/>
            <person name="Holt K."/>
            <person name="Howden P.J."/>
            <person name="Hunt A.R."/>
            <person name="Hunt S.E."/>
            <person name="Hunter G."/>
            <person name="Isherwood J."/>
            <person name="James R."/>
            <person name="Johnson C."/>
            <person name="Johnson D."/>
            <person name="Joy A."/>
            <person name="Kay M."/>
            <person name="Kershaw J.K."/>
            <person name="Kibukawa M."/>
            <person name="Kimberley A.M."/>
            <person name="King A."/>
            <person name="Knights A.J."/>
            <person name="Lad H."/>
            <person name="Laird G."/>
            <person name="Lawlor S."/>
            <person name="Leongamornlert D.A."/>
            <person name="Lloyd D.M."/>
            <person name="Loveland J."/>
            <person name="Lovell J."/>
            <person name="Lush M.J."/>
            <person name="Lyne R."/>
            <person name="Martin S."/>
            <person name="Mashreghi-Mohammadi M."/>
            <person name="Matthews L."/>
            <person name="Matthews N.S.W."/>
            <person name="McLaren S."/>
            <person name="Milne S."/>
            <person name="Mistry S."/>
            <person name="Moore M.J.F."/>
            <person name="Nickerson T."/>
            <person name="O'Dell C.N."/>
            <person name="Oliver K."/>
            <person name="Palmeiri A."/>
            <person name="Palmer S.A."/>
            <person name="Parker A."/>
            <person name="Patel D."/>
            <person name="Pearce A.V."/>
            <person name="Peck A.I."/>
            <person name="Pelan S."/>
            <person name="Phelps K."/>
            <person name="Phillimore B.J."/>
            <person name="Plumb R."/>
            <person name="Rajan J."/>
            <person name="Raymond C."/>
            <person name="Rouse G."/>
            <person name="Saenphimmachak C."/>
            <person name="Sehra H.K."/>
            <person name="Sheridan E."/>
            <person name="Shownkeen R."/>
            <person name="Sims S."/>
            <person name="Skuce C.D."/>
            <person name="Smith M."/>
            <person name="Steward C."/>
            <person name="Subramanian S."/>
            <person name="Sycamore N."/>
            <person name="Tracey A."/>
            <person name="Tromans A."/>
            <person name="Van Helmond Z."/>
            <person name="Wall M."/>
            <person name="Wallis J.M."/>
            <person name="White S."/>
            <person name="Whitehead S.L."/>
            <person name="Wilkinson J.E."/>
            <person name="Willey D.L."/>
            <person name="Williams H."/>
            <person name="Wilming L."/>
            <person name="Wray P.W."/>
            <person name="Wu Z."/>
            <person name="Coulson A."/>
            <person name="Vaudin M."/>
            <person name="Sulston J.E."/>
            <person name="Durbin R.M."/>
            <person name="Hubbard T."/>
            <person name="Wooster R."/>
            <person name="Dunham I."/>
            <person name="Carter N.P."/>
            <person name="McVean G."/>
            <person name="Ross M.T."/>
            <person name="Harrow J."/>
            <person name="Olson M.V."/>
            <person name="Beck S."/>
            <person name="Rogers J."/>
            <person name="Bentley D.R."/>
        </authorList>
    </citation>
    <scope>NUCLEOTIDE SEQUENCE [LARGE SCALE GENOMIC DNA]</scope>
</reference>
<reference key="5">
    <citation type="journal article" date="2007" name="Angew. Chem. Int. Ed. Engl.">
        <title>Saccharin inhibits carbonic anhydrases: possible explanation for its unpleasant metallic aftertaste.</title>
        <authorList>
            <person name="Koehler K."/>
            <person name="Hillebrecht A."/>
            <person name="Schulze Wischeler J."/>
            <person name="Innocenti A."/>
            <person name="Heine A."/>
            <person name="Supuran C.T."/>
            <person name="Klebe G."/>
        </authorList>
    </citation>
    <scope>ACTIVITY REGULATION</scope>
</reference>
<reference key="6">
    <citation type="journal article" date="2007" name="Bioorg. Med. Chem. Lett.">
        <title>Phosph(on)ate as a zinc-binding group in metalloenzyme inhibitors: X-ray crystal structure of the antiviral drug foscarnet complexed to human carbonic anhydrase I.</title>
        <authorList>
            <person name="Temperini C."/>
            <person name="Innocenti A."/>
            <person name="Guerri A."/>
            <person name="Scozzafava A."/>
            <person name="Rusconi S."/>
            <person name="Supuran C.T."/>
        </authorList>
    </citation>
    <scope>ACTIVITY REGULATION</scope>
</reference>
<reference key="7">
    <citation type="journal article" date="2009" name="Bioorg. Med. Chem. Lett.">
        <title>A thiabendazole sulfonamide shows potent inhibitory activity against mammalian and nematode alpha-carbonic anhydrases.</title>
        <authorList>
            <person name="Crocetti L."/>
            <person name="Maresca A."/>
            <person name="Temperini C."/>
            <person name="Hall R.A."/>
            <person name="Scozzafava A."/>
            <person name="Muehlschlegel F.A."/>
            <person name="Supuran C.T."/>
        </authorList>
    </citation>
    <scope>ACTIVITY REGULATION</scope>
</reference>
<reference key="8">
    <citation type="journal article" date="2009" name="J. Am. Chem. Soc.">
        <title>Non-zinc mediated inhibition of carbonic anhydrases: coumarins are a new class of suicide inhibitors.</title>
        <authorList>
            <person name="Maresca A."/>
            <person name="Temperini C."/>
            <person name="Vu H."/>
            <person name="Pham N.B."/>
            <person name="Poulsen S.-A."/>
            <person name="Scozzafava A."/>
            <person name="Quinn R.J."/>
            <person name="Supuran C.T."/>
        </authorList>
    </citation>
    <scope>ACTIVITY REGULATION</scope>
</reference>
<reference key="9">
    <citation type="journal article" date="1972" name="Cold Spring Harb. Symp. Quant. Biol.">
        <title>Crystal structure of human erythrocyte carbonic anhydrase C. VI. The three-dimensional structure at high resolution in relation to other mammalian carbonic anhydrases.</title>
        <authorList>
            <person name="Kannan K.K."/>
            <person name="Liljas A."/>
            <person name="Waara I."/>
            <person name="Bergsten P.C."/>
            <person name="Loevgren S."/>
            <person name="Strandberg B."/>
            <person name="Bengtsson U."/>
            <person name="Carlbom U."/>
            <person name="Fridborg K."/>
            <person name="Jaerup L."/>
            <person name="Petef M."/>
        </authorList>
    </citation>
    <scope>X-RAY CRYSTALLOGRAPHY (1.90 ANGSTROMS) OF 21-290 IN COMPLEX WITH MAGNESIUM ION</scope>
</reference>
<gene>
    <name type="primary">CA6</name>
</gene>
<sequence>MRALVLLLSLFLLGGQAQHVSDWTYSEGALDEAHWPQHYPACGGQRQSPINLQRTKVRYNPSLKGLNMTGYETQAGEFPMVNNGHTVQISLPSTMRMTVADGTVYIAQQMHFHWGGASSEISGSEHTVDGIRHVIEIHIVHYNSKYKSYDIAQDAPDGLAVLAAFVEVKNYPENTYYSNFISHLANIKYPGQRTTLTGLDVQDMLPRNLQHYYTYHGSLTTPPCTENVHWFVLADFVKLSRTQVWKLENSLLDHRNKTIHNDYRRTQPLNHRVVESNFPNQEYTLGSEFQFYLHKIEEILDYLRRALN</sequence>
<comment type="function">
    <text>Reversible hydration of carbon dioxide. Its role in saliva is unknown.</text>
</comment>
<comment type="catalytic activity">
    <reaction>
        <text>hydrogencarbonate + H(+) = CO2 + H2O</text>
        <dbReference type="Rhea" id="RHEA:10748"/>
        <dbReference type="ChEBI" id="CHEBI:15377"/>
        <dbReference type="ChEBI" id="CHEBI:15378"/>
        <dbReference type="ChEBI" id="CHEBI:16526"/>
        <dbReference type="ChEBI" id="CHEBI:17544"/>
        <dbReference type="EC" id="4.2.1.1"/>
    </reaction>
</comment>
<comment type="cofactor">
    <cofactor evidence="2">
        <name>Zn(2+)</name>
        <dbReference type="ChEBI" id="CHEBI:29105"/>
    </cofactor>
</comment>
<comment type="activity regulation">
    <text evidence="5 6 8 9">Inhibited by coumarins, sulfonamide derivatives such as acetazolamide (AZA), saccharin and Foscarnet (phosphonoformate trisodium salt).</text>
</comment>
<comment type="subcellular location">
    <subcellularLocation>
        <location>Secreted</location>
    </subcellularLocation>
</comment>
<comment type="alternative products">
    <event type="alternative splicing"/>
    <isoform>
        <id>P23280-1</id>
        <name>1</name>
        <sequence type="displayed"/>
    </isoform>
    <isoform>
        <id>P23280-2</id>
        <name>2</name>
        <sequence type="described" ref="VSP_045435"/>
    </isoform>
    <isoform>
        <id>P23280-3</id>
        <name>3</name>
        <sequence type="described" ref="VSP_046668"/>
    </isoform>
</comment>
<comment type="tissue specificity">
    <text>Major constituent of saliva.</text>
</comment>
<comment type="similarity">
    <text evidence="13">Belongs to the alpha-carbonic anhydrase family.</text>
</comment>
<dbReference type="EC" id="4.2.1.1"/>
<dbReference type="EMBL" id="M57892">
    <property type="protein sequence ID" value="AAA51892.1"/>
    <property type="molecule type" value="mRNA"/>
</dbReference>
<dbReference type="EMBL" id="AF128418">
    <property type="protein sequence ID" value="AAF22565.1"/>
    <property type="molecule type" value="Genomic_DNA"/>
</dbReference>
<dbReference type="EMBL" id="AF128411">
    <property type="protein sequence ID" value="AAF22565.1"/>
    <property type="status" value="JOINED"/>
    <property type="molecule type" value="Genomic_DNA"/>
</dbReference>
<dbReference type="EMBL" id="AF128412">
    <property type="protein sequence ID" value="AAF22565.1"/>
    <property type="status" value="JOINED"/>
    <property type="molecule type" value="Genomic_DNA"/>
</dbReference>
<dbReference type="EMBL" id="AF128413">
    <property type="protein sequence ID" value="AAF22565.1"/>
    <property type="status" value="JOINED"/>
    <property type="molecule type" value="Genomic_DNA"/>
</dbReference>
<dbReference type="EMBL" id="AF128414">
    <property type="protein sequence ID" value="AAF22565.1"/>
    <property type="status" value="JOINED"/>
    <property type="molecule type" value="Genomic_DNA"/>
</dbReference>
<dbReference type="EMBL" id="AF128415">
    <property type="protein sequence ID" value="AAF22565.1"/>
    <property type="status" value="JOINED"/>
    <property type="molecule type" value="Genomic_DNA"/>
</dbReference>
<dbReference type="EMBL" id="AF128416">
    <property type="protein sequence ID" value="AAF22565.1"/>
    <property type="status" value="JOINED"/>
    <property type="molecule type" value="Genomic_DNA"/>
</dbReference>
<dbReference type="EMBL" id="AF128417">
    <property type="protein sequence ID" value="AAF22565.1"/>
    <property type="status" value="JOINED"/>
    <property type="molecule type" value="Genomic_DNA"/>
</dbReference>
<dbReference type="EMBL" id="AB102863">
    <property type="protein sequence ID" value="BAD89397.1"/>
    <property type="molecule type" value="mRNA"/>
</dbReference>
<dbReference type="EMBL" id="AB103091">
    <property type="protein sequence ID" value="BAD89434.1"/>
    <property type="molecule type" value="mRNA"/>
</dbReference>
<dbReference type="EMBL" id="AL139415">
    <property type="status" value="NOT_ANNOTATED_CDS"/>
    <property type="molecule type" value="Genomic_DNA"/>
</dbReference>
<dbReference type="CCDS" id="CCDS30578.1">
    <molecule id="P23280-1"/>
</dbReference>
<dbReference type="CCDS" id="CCDS57970.1">
    <molecule id="P23280-2"/>
</dbReference>
<dbReference type="CCDS" id="CCDS57971.1">
    <molecule id="P23280-3"/>
</dbReference>
<dbReference type="PIR" id="A37917">
    <property type="entry name" value="CRHU6"/>
</dbReference>
<dbReference type="RefSeq" id="NP_001206.2">
    <molecule id="P23280-1"/>
    <property type="nucleotide sequence ID" value="NM_001215.4"/>
</dbReference>
<dbReference type="RefSeq" id="NP_001257429.1">
    <molecule id="P23280-2"/>
    <property type="nucleotide sequence ID" value="NM_001270500.2"/>
</dbReference>
<dbReference type="RefSeq" id="NP_001257430.1">
    <molecule id="P23280-3"/>
    <property type="nucleotide sequence ID" value="NM_001270501.2"/>
</dbReference>
<dbReference type="PDB" id="3FE4">
    <property type="method" value="X-ray"/>
    <property type="resolution" value="1.90 A"/>
    <property type="chains" value="A/B=21-290"/>
</dbReference>
<dbReference type="PDBsum" id="3FE4"/>
<dbReference type="SMR" id="P23280"/>
<dbReference type="BioGRID" id="107220">
    <property type="interactions" value="87"/>
</dbReference>
<dbReference type="CORUM" id="P23280"/>
<dbReference type="FunCoup" id="P23280">
    <property type="interactions" value="69"/>
</dbReference>
<dbReference type="IntAct" id="P23280">
    <property type="interactions" value="62"/>
</dbReference>
<dbReference type="STRING" id="9606.ENSP00000366654"/>
<dbReference type="BindingDB" id="P23280"/>
<dbReference type="ChEMBL" id="CHEMBL3025"/>
<dbReference type="DrugBank" id="DB07050">
    <property type="generic name" value="5-[(phenylsulfonyl)amino]-1,3,4-thiadiazole-2-sulfonamide"/>
</dbReference>
<dbReference type="DrugBank" id="DB00562">
    <property type="generic name" value="Benzthiazide"/>
</dbReference>
<dbReference type="DrugBank" id="DB03854">
    <property type="generic name" value="Cadaverine"/>
</dbReference>
<dbReference type="DrugBank" id="DB14086">
    <property type="generic name" value="Cianidanol"/>
</dbReference>
<dbReference type="DrugBank" id="DB04665">
    <property type="generic name" value="Coumarin"/>
</dbReference>
<dbReference type="DrugBank" id="DB11672">
    <property type="generic name" value="Curcumin"/>
</dbReference>
<dbReference type="DrugBank" id="DB00606">
    <property type="generic name" value="Cyclothiazide"/>
</dbReference>
<dbReference type="DrugBank" id="DB08846">
    <property type="generic name" value="Ellagic acid"/>
</dbReference>
<dbReference type="DrugBank" id="DB07767">
    <property type="generic name" value="Ferulic acid"/>
</dbReference>
<dbReference type="DrugBank" id="DB03260">
    <property type="generic name" value="Hexamethylene diamine"/>
</dbReference>
<dbReference type="DrugBank" id="DB06795">
    <property type="generic name" value="Mafenide"/>
</dbReference>
<dbReference type="DrugBank" id="DB04066">
    <property type="generic name" value="p-Coumaric acid"/>
</dbReference>
<dbReference type="DrugBank" id="DB17299">
    <property type="generic name" value="p-Toluenesulfonamide"/>
</dbReference>
<dbReference type="DrugBank" id="DB00936">
    <property type="generic name" value="Salicylic acid"/>
</dbReference>
<dbReference type="DrugBank" id="DB00127">
    <property type="generic name" value="Spermine"/>
</dbReference>
<dbReference type="DrugBank" id="DB00909">
    <property type="generic name" value="Zonisamide"/>
</dbReference>
<dbReference type="DrugCentral" id="P23280"/>
<dbReference type="GlyConnect" id="1924">
    <property type="glycosylation" value="10 N-Linked glycans (3 sites)"/>
</dbReference>
<dbReference type="GlyCosmos" id="P23280">
    <property type="glycosylation" value="3 sites, 13 glycans"/>
</dbReference>
<dbReference type="GlyGen" id="P23280">
    <property type="glycosylation" value="3 sites, 13 N-linked glycans (3 sites)"/>
</dbReference>
<dbReference type="iPTMnet" id="P23280"/>
<dbReference type="BioMuta" id="CA6"/>
<dbReference type="DMDM" id="116241278"/>
<dbReference type="jPOST" id="P23280"/>
<dbReference type="MassIVE" id="P23280"/>
<dbReference type="PaxDb" id="9606-ENSP00000366654"/>
<dbReference type="PeptideAtlas" id="P23280"/>
<dbReference type="PRIDE" id="P23280"/>
<dbReference type="ProteomicsDB" id="16991"/>
<dbReference type="ProteomicsDB" id="54077">
    <molecule id="P23280-1"/>
</dbReference>
<dbReference type="ProteomicsDB" id="62797"/>
<dbReference type="TopDownProteomics" id="P23280-1">
    <molecule id="P23280-1"/>
</dbReference>
<dbReference type="Antibodypedia" id="27596">
    <property type="antibodies" value="350 antibodies from 29 providers"/>
</dbReference>
<dbReference type="DNASU" id="765"/>
<dbReference type="Ensembl" id="ENST00000377436.6">
    <molecule id="P23280-2"/>
    <property type="protein sequence ID" value="ENSP00000366654.3"/>
    <property type="gene ID" value="ENSG00000131686.15"/>
</dbReference>
<dbReference type="Ensembl" id="ENST00000377442.3">
    <molecule id="P23280-3"/>
    <property type="protein sequence ID" value="ENSP00000366661.2"/>
    <property type="gene ID" value="ENSG00000131686.15"/>
</dbReference>
<dbReference type="Ensembl" id="ENST00000377443.7">
    <molecule id="P23280-1"/>
    <property type="protein sequence ID" value="ENSP00000366662.2"/>
    <property type="gene ID" value="ENSG00000131686.15"/>
</dbReference>
<dbReference type="GeneID" id="765"/>
<dbReference type="KEGG" id="hsa:765"/>
<dbReference type="MANE-Select" id="ENST00000377443.7">
    <property type="protein sequence ID" value="ENSP00000366662.2"/>
    <property type="RefSeq nucleotide sequence ID" value="NM_001215.4"/>
    <property type="RefSeq protein sequence ID" value="NP_001206.2"/>
</dbReference>
<dbReference type="UCSC" id="uc001apm.5">
    <molecule id="P23280-1"/>
    <property type="organism name" value="human"/>
</dbReference>
<dbReference type="AGR" id="HGNC:1380"/>
<dbReference type="CTD" id="765"/>
<dbReference type="DisGeNET" id="765"/>
<dbReference type="GeneCards" id="CA6"/>
<dbReference type="HGNC" id="HGNC:1380">
    <property type="gene designation" value="CA6"/>
</dbReference>
<dbReference type="HPA" id="ENSG00000131686">
    <property type="expression patterns" value="Tissue enriched (salivary)"/>
</dbReference>
<dbReference type="MIM" id="114780">
    <property type="type" value="gene"/>
</dbReference>
<dbReference type="neXtProt" id="NX_P23280"/>
<dbReference type="OpenTargets" id="ENSG00000131686"/>
<dbReference type="PharmGKB" id="PA25995"/>
<dbReference type="VEuPathDB" id="HostDB:ENSG00000131686"/>
<dbReference type="eggNOG" id="KOG0382">
    <property type="taxonomic scope" value="Eukaryota"/>
</dbReference>
<dbReference type="GeneTree" id="ENSGT00940000160409"/>
<dbReference type="HOGENOM" id="CLU_039326_1_0_1"/>
<dbReference type="InParanoid" id="P23280"/>
<dbReference type="OMA" id="PMINNGH"/>
<dbReference type="OrthoDB" id="429145at2759"/>
<dbReference type="PAN-GO" id="P23280">
    <property type="GO annotations" value="3 GO annotations based on evolutionary models"/>
</dbReference>
<dbReference type="PhylomeDB" id="P23280"/>
<dbReference type="TreeFam" id="TF316425"/>
<dbReference type="BRENDA" id="4.2.1.1">
    <property type="organism ID" value="2681"/>
</dbReference>
<dbReference type="PathwayCommons" id="P23280"/>
<dbReference type="Reactome" id="R-HSA-1475029">
    <property type="pathway name" value="Reversible hydration of carbon dioxide"/>
</dbReference>
<dbReference type="SignaLink" id="P23280"/>
<dbReference type="BioGRID-ORCS" id="765">
    <property type="hits" value="13 hits in 1155 CRISPR screens"/>
</dbReference>
<dbReference type="ChiTaRS" id="CA6">
    <property type="organism name" value="human"/>
</dbReference>
<dbReference type="EvolutionaryTrace" id="P23280"/>
<dbReference type="GeneWiki" id="Carbonic_anhydrase_VI"/>
<dbReference type="GenomeRNAi" id="765"/>
<dbReference type="Pharos" id="P23280">
    <property type="development level" value="Tclin"/>
</dbReference>
<dbReference type="PRO" id="PR:P23280"/>
<dbReference type="Proteomes" id="UP000005640">
    <property type="component" value="Chromosome 1"/>
</dbReference>
<dbReference type="RNAct" id="P23280">
    <property type="molecule type" value="protein"/>
</dbReference>
<dbReference type="Bgee" id="ENSG00000131686">
    <property type="expression patterns" value="Expressed in parotid gland and 93 other cell types or tissues"/>
</dbReference>
<dbReference type="ExpressionAtlas" id="P23280">
    <property type="expression patterns" value="baseline and differential"/>
</dbReference>
<dbReference type="GO" id="GO:0005829">
    <property type="term" value="C:cytosol"/>
    <property type="evidence" value="ECO:0007669"/>
    <property type="project" value="Ensembl"/>
</dbReference>
<dbReference type="GO" id="GO:0070062">
    <property type="term" value="C:extracellular exosome"/>
    <property type="evidence" value="ECO:0007005"/>
    <property type="project" value="UniProtKB"/>
</dbReference>
<dbReference type="GO" id="GO:0005576">
    <property type="term" value="C:extracellular region"/>
    <property type="evidence" value="ECO:0000304"/>
    <property type="project" value="Reactome"/>
</dbReference>
<dbReference type="GO" id="GO:0005615">
    <property type="term" value="C:extracellular space"/>
    <property type="evidence" value="ECO:0000314"/>
    <property type="project" value="UniProtKB"/>
</dbReference>
<dbReference type="GO" id="GO:0004089">
    <property type="term" value="F:carbonate dehydratase activity"/>
    <property type="evidence" value="ECO:0000318"/>
    <property type="project" value="GO_Central"/>
</dbReference>
<dbReference type="GO" id="GO:0008270">
    <property type="term" value="F:zinc ion binding"/>
    <property type="evidence" value="ECO:0007669"/>
    <property type="project" value="InterPro"/>
</dbReference>
<dbReference type="GO" id="GO:0001580">
    <property type="term" value="P:detection of chemical stimulus involved in sensory perception of bitter taste"/>
    <property type="evidence" value="ECO:0000314"/>
    <property type="project" value="UniProtKB"/>
</dbReference>
<dbReference type="CDD" id="cd03125">
    <property type="entry name" value="alpha_CA_VI"/>
    <property type="match status" value="1"/>
</dbReference>
<dbReference type="DisProt" id="DP02680"/>
<dbReference type="FunFam" id="3.10.200.10:FF:000003">
    <property type="entry name" value="Carbonic anhydrase 12"/>
    <property type="match status" value="1"/>
</dbReference>
<dbReference type="Gene3D" id="3.10.200.10">
    <property type="entry name" value="Alpha carbonic anhydrase"/>
    <property type="match status" value="1"/>
</dbReference>
<dbReference type="InterPro" id="IPR001148">
    <property type="entry name" value="CA_dom"/>
</dbReference>
<dbReference type="InterPro" id="IPR036398">
    <property type="entry name" value="CA_dom_sf"/>
</dbReference>
<dbReference type="InterPro" id="IPR023561">
    <property type="entry name" value="Carbonic_anhydrase_a-class"/>
</dbReference>
<dbReference type="InterPro" id="IPR018338">
    <property type="entry name" value="Carbonic_anhydrase_a-class_CS"/>
</dbReference>
<dbReference type="PANTHER" id="PTHR18952">
    <property type="entry name" value="CARBONIC ANHYDRASE"/>
    <property type="match status" value="1"/>
</dbReference>
<dbReference type="PANTHER" id="PTHR18952:SF110">
    <property type="entry name" value="CARBONIC ANHYDRASE 6"/>
    <property type="match status" value="1"/>
</dbReference>
<dbReference type="Pfam" id="PF00194">
    <property type="entry name" value="Carb_anhydrase"/>
    <property type="match status" value="1"/>
</dbReference>
<dbReference type="SMART" id="SM01057">
    <property type="entry name" value="Carb_anhydrase"/>
    <property type="match status" value="1"/>
</dbReference>
<dbReference type="SUPFAM" id="SSF51069">
    <property type="entry name" value="Carbonic anhydrase"/>
    <property type="match status" value="1"/>
</dbReference>
<dbReference type="PROSITE" id="PS00162">
    <property type="entry name" value="ALPHA_CA_1"/>
    <property type="match status" value="1"/>
</dbReference>
<dbReference type="PROSITE" id="PS51144">
    <property type="entry name" value="ALPHA_CA_2"/>
    <property type="match status" value="1"/>
</dbReference>
<evidence type="ECO:0000250" key="1">
    <source>
        <dbReference type="UniProtKB" id="P00918"/>
    </source>
</evidence>
<evidence type="ECO:0000250" key="2">
    <source>
        <dbReference type="UniProtKB" id="P23589"/>
    </source>
</evidence>
<evidence type="ECO:0000255" key="3"/>
<evidence type="ECO:0000255" key="4">
    <source>
        <dbReference type="PROSITE-ProRule" id="PRU01134"/>
    </source>
</evidence>
<evidence type="ECO:0000269" key="5">
    <source>
    </source>
</evidence>
<evidence type="ECO:0000269" key="6">
    <source>
    </source>
</evidence>
<evidence type="ECO:0000269" key="7">
    <source>
    </source>
</evidence>
<evidence type="ECO:0000269" key="8">
    <source>
    </source>
</evidence>
<evidence type="ECO:0000269" key="9">
    <source>
    </source>
</evidence>
<evidence type="ECO:0000269" key="10">
    <source ref="2"/>
</evidence>
<evidence type="ECO:0000269" key="11">
    <source ref="3"/>
</evidence>
<evidence type="ECO:0000303" key="12">
    <source ref="3"/>
</evidence>
<evidence type="ECO:0000305" key="13"/>
<evidence type="ECO:0000305" key="14">
    <source>
    </source>
</evidence>
<evidence type="ECO:0007829" key="15">
    <source>
        <dbReference type="PDB" id="3FE4"/>
    </source>
</evidence>
<keyword id="KW-0002">3D-structure</keyword>
<keyword id="KW-0025">Alternative splicing</keyword>
<keyword id="KW-1015">Disulfide bond</keyword>
<keyword id="KW-0325">Glycoprotein</keyword>
<keyword id="KW-0456">Lyase</keyword>
<keyword id="KW-0479">Metal-binding</keyword>
<keyword id="KW-1267">Proteomics identification</keyword>
<keyword id="KW-1185">Reference proteome</keyword>
<keyword id="KW-0964">Secreted</keyword>
<keyword id="KW-0732">Signal</keyword>
<keyword id="KW-0862">Zinc</keyword>
<feature type="signal peptide" evidence="3">
    <location>
        <begin position="1"/>
        <end position="17"/>
    </location>
</feature>
<feature type="chain" id="PRO_0000004241" description="Carbonic anhydrase 6">
    <location>
        <begin position="18"/>
        <end position="308"/>
    </location>
</feature>
<feature type="domain" description="Alpha-carbonic anhydrase" evidence="4">
    <location>
        <begin position="21"/>
        <end position="278"/>
    </location>
</feature>
<feature type="active site" description="Proton donor/acceptor" evidence="1">
    <location>
        <position position="85"/>
    </location>
</feature>
<feature type="binding site" evidence="14">
    <location>
        <position position="111"/>
    </location>
    <ligand>
        <name>Zn(2+)</name>
        <dbReference type="ChEBI" id="CHEBI:29105"/>
        <note>catalytic</note>
    </ligand>
</feature>
<feature type="binding site" evidence="14">
    <location>
        <position position="113"/>
    </location>
    <ligand>
        <name>Zn(2+)</name>
        <dbReference type="ChEBI" id="CHEBI:29105"/>
        <note>catalytic</note>
    </ligand>
</feature>
<feature type="binding site" evidence="14">
    <location>
        <position position="138"/>
    </location>
    <ligand>
        <name>Zn(2+)</name>
        <dbReference type="ChEBI" id="CHEBI:29105"/>
        <note>catalytic</note>
    </ligand>
</feature>
<feature type="binding site" evidence="1">
    <location>
        <begin position="220"/>
        <end position="221"/>
    </location>
    <ligand>
        <name>substrate</name>
    </ligand>
</feature>
<feature type="glycosylation site" description="N-linked (GlcNAc...) asparagine" evidence="3">
    <location>
        <position position="67"/>
    </location>
</feature>
<feature type="glycosylation site" description="N-linked (GlcNAc...) asparagine" evidence="3">
    <location>
        <position position="256"/>
    </location>
</feature>
<feature type="disulfide bond" evidence="3">
    <location>
        <begin position="42"/>
        <end position="224"/>
    </location>
</feature>
<feature type="splice variant" id="VSP_046668" description="In isoform 3." evidence="12">
    <location>
        <begin position="27"/>
        <end position="86"/>
    </location>
</feature>
<feature type="splice variant" id="VSP_045435" description="In isoform 2." evidence="12">
    <original>EYTLGSEFQFYLHKIEEILDYLRRALN</original>
    <variation>GKGHGGHRGRSQNPRVQPTSTRHPLALGSLEA</variation>
    <location>
        <begin position="282"/>
        <end position="308"/>
    </location>
</feature>
<feature type="sequence variant" id="VAR_033712" description="In dbSNP:rs34265054.">
    <original>Q</original>
    <variation>L</variation>
    <location>
        <position position="37"/>
    </location>
</feature>
<feature type="sequence variant" id="VAR_028268" description="In dbSNP:rs2274327.">
    <original>T</original>
    <variation>M</variation>
    <location>
        <position position="55"/>
    </location>
</feature>
<feature type="sequence variant" id="VAR_061093" description="In dbSNP:rs58800854.">
    <original>R</original>
    <variation>W</variation>
    <location>
        <position position="58"/>
    </location>
</feature>
<feature type="sequence variant" id="VAR_028269" description="In dbSNP:rs2274328.">
    <original>M</original>
    <variation>L</variation>
    <location>
        <position position="68"/>
    </location>
</feature>
<feature type="sequence variant" id="VAR_028270" description="In dbSNP:rs2274329.">
    <original>G</original>
    <variation>A</variation>
    <location>
        <position position="70"/>
    </location>
</feature>
<feature type="sequence variant" id="VAR_028271" description="In dbSNP:rs2274333." evidence="7 10 11">
    <original>S</original>
    <variation>G</variation>
    <location>
        <position position="90"/>
    </location>
</feature>
<feature type="sequence conflict" description="In Ref. 1; AAA51892 and 4; BAD89434." evidence="13" ref="1 4">
    <original>T</original>
    <variation>I</variation>
    <location>
        <position position="103"/>
    </location>
</feature>
<feature type="sequence conflict" description="In Ref. 1; AAA51892, 2; AAF22565 and 4; BAD89434." evidence="13" ref="1 2 4">
    <original>S</original>
    <variation>T</variation>
    <location>
        <position position="148"/>
    </location>
</feature>
<feature type="sequence conflict" description="In Ref. 1; AAA51892, 2; AAF22565 and 4; BAD89434." evidence="13" ref="1 2 4">
    <original>N</original>
    <variation>K</variation>
    <location>
        <position position="270"/>
    </location>
</feature>
<feature type="helix" evidence="15">
    <location>
        <begin position="35"/>
        <end position="38"/>
    </location>
</feature>
<feature type="helix" evidence="15">
    <location>
        <begin position="40"/>
        <end position="43"/>
    </location>
</feature>
<feature type="strand" evidence="15">
    <location>
        <begin position="44"/>
        <end position="46"/>
    </location>
</feature>
<feature type="helix" evidence="15">
    <location>
        <begin position="54"/>
        <end position="56"/>
    </location>
</feature>
<feature type="strand" evidence="15">
    <location>
        <begin position="68"/>
        <end position="70"/>
    </location>
</feature>
<feature type="strand" evidence="15">
    <location>
        <begin position="72"/>
        <end position="82"/>
    </location>
</feature>
<feature type="strand" evidence="15">
    <location>
        <begin position="87"/>
        <end position="90"/>
    </location>
</feature>
<feature type="strand" evidence="15">
    <location>
        <begin position="96"/>
        <end position="98"/>
    </location>
</feature>
<feature type="strand" evidence="15">
    <location>
        <begin position="104"/>
        <end position="114"/>
    </location>
</feature>
<feature type="strand" evidence="15">
    <location>
        <begin position="125"/>
        <end position="128"/>
    </location>
</feature>
<feature type="strand" evidence="15">
    <location>
        <begin position="134"/>
        <end position="143"/>
    </location>
</feature>
<feature type="strand" evidence="15">
    <location>
        <begin position="146"/>
        <end position="148"/>
    </location>
</feature>
<feature type="helix" evidence="15">
    <location>
        <begin position="149"/>
        <end position="152"/>
    </location>
</feature>
<feature type="strand" evidence="15">
    <location>
        <begin position="159"/>
        <end position="167"/>
    </location>
</feature>
<feature type="helix" evidence="15">
    <location>
        <begin position="175"/>
        <end position="177"/>
    </location>
</feature>
<feature type="helix" evidence="15">
    <location>
        <begin position="178"/>
        <end position="183"/>
    </location>
</feature>
<feature type="helix" evidence="15">
    <location>
        <begin position="184"/>
        <end position="187"/>
    </location>
</feature>
<feature type="strand" evidence="15">
    <location>
        <begin position="193"/>
        <end position="199"/>
    </location>
</feature>
<feature type="helix" evidence="15">
    <location>
        <begin position="201"/>
        <end position="204"/>
    </location>
</feature>
<feature type="strand" evidence="15">
    <location>
        <begin position="212"/>
        <end position="217"/>
    </location>
</feature>
<feature type="strand" evidence="15">
    <location>
        <begin position="228"/>
        <end position="235"/>
    </location>
</feature>
<feature type="helix" evidence="15">
    <location>
        <begin position="241"/>
        <end position="249"/>
    </location>
</feature>
<feature type="strand" evidence="15">
    <location>
        <begin position="256"/>
        <end position="258"/>
    </location>
</feature>
<feature type="strand" evidence="15">
    <location>
        <begin position="275"/>
        <end position="277"/>
    </location>
</feature>
<accession>P23280</accession>
<accession>E7EMQ1</accession>
<accession>Q5FBW3</accession>
<accession>Q5FC00</accession>
<accession>Q96QX8</accession>
<accession>Q9UF03</accession>